<dbReference type="EC" id="2.2.1.2" evidence="2"/>
<dbReference type="EMBL" id="AM747720">
    <property type="protein sequence ID" value="CAR52734.1"/>
    <property type="molecule type" value="Genomic_DNA"/>
</dbReference>
<dbReference type="RefSeq" id="WP_012492750.1">
    <property type="nucleotide sequence ID" value="NC_011000.1"/>
</dbReference>
<dbReference type="SMR" id="B4E6F9"/>
<dbReference type="GeneID" id="56558929"/>
<dbReference type="KEGG" id="bcj:BCAL2433"/>
<dbReference type="eggNOG" id="COG0176">
    <property type="taxonomic scope" value="Bacteria"/>
</dbReference>
<dbReference type="HOGENOM" id="CLU_047470_0_1_4"/>
<dbReference type="BioCyc" id="BCEN216591:G1G1V-2687-MONOMER"/>
<dbReference type="UniPathway" id="UPA00115">
    <property type="reaction ID" value="UER00414"/>
</dbReference>
<dbReference type="Proteomes" id="UP000001035">
    <property type="component" value="Chromosome 1"/>
</dbReference>
<dbReference type="GO" id="GO:0005737">
    <property type="term" value="C:cytoplasm"/>
    <property type="evidence" value="ECO:0007669"/>
    <property type="project" value="UniProtKB-SubCell"/>
</dbReference>
<dbReference type="GO" id="GO:0004801">
    <property type="term" value="F:transaldolase activity"/>
    <property type="evidence" value="ECO:0000250"/>
    <property type="project" value="UniProtKB"/>
</dbReference>
<dbReference type="GO" id="GO:0005975">
    <property type="term" value="P:carbohydrate metabolic process"/>
    <property type="evidence" value="ECO:0007669"/>
    <property type="project" value="InterPro"/>
</dbReference>
<dbReference type="GO" id="GO:0006098">
    <property type="term" value="P:pentose-phosphate shunt"/>
    <property type="evidence" value="ECO:0007669"/>
    <property type="project" value="UniProtKB-UniRule"/>
</dbReference>
<dbReference type="CDD" id="cd00957">
    <property type="entry name" value="Transaldolase_TalAB"/>
    <property type="match status" value="1"/>
</dbReference>
<dbReference type="FunFam" id="3.20.20.70:FF:000002">
    <property type="entry name" value="Transaldolase"/>
    <property type="match status" value="1"/>
</dbReference>
<dbReference type="Gene3D" id="3.20.20.70">
    <property type="entry name" value="Aldolase class I"/>
    <property type="match status" value="1"/>
</dbReference>
<dbReference type="HAMAP" id="MF_00492">
    <property type="entry name" value="Transaldolase_1"/>
    <property type="match status" value="1"/>
</dbReference>
<dbReference type="InterPro" id="IPR013785">
    <property type="entry name" value="Aldolase_TIM"/>
</dbReference>
<dbReference type="InterPro" id="IPR001585">
    <property type="entry name" value="TAL/FSA"/>
</dbReference>
<dbReference type="InterPro" id="IPR004730">
    <property type="entry name" value="Transaldolase_1"/>
</dbReference>
<dbReference type="InterPro" id="IPR018225">
    <property type="entry name" value="Transaldolase_AS"/>
</dbReference>
<dbReference type="NCBIfam" id="NF009001">
    <property type="entry name" value="PRK12346.1"/>
    <property type="match status" value="1"/>
</dbReference>
<dbReference type="NCBIfam" id="TIGR00874">
    <property type="entry name" value="talAB"/>
    <property type="match status" value="1"/>
</dbReference>
<dbReference type="PANTHER" id="PTHR10683">
    <property type="entry name" value="TRANSALDOLASE"/>
    <property type="match status" value="1"/>
</dbReference>
<dbReference type="PANTHER" id="PTHR10683:SF18">
    <property type="entry name" value="TRANSALDOLASE"/>
    <property type="match status" value="1"/>
</dbReference>
<dbReference type="Pfam" id="PF00923">
    <property type="entry name" value="TAL_FSA"/>
    <property type="match status" value="1"/>
</dbReference>
<dbReference type="SUPFAM" id="SSF51569">
    <property type="entry name" value="Aldolase"/>
    <property type="match status" value="1"/>
</dbReference>
<dbReference type="PROSITE" id="PS01054">
    <property type="entry name" value="TRANSALDOLASE_1"/>
    <property type="match status" value="1"/>
</dbReference>
<dbReference type="PROSITE" id="PS00958">
    <property type="entry name" value="TRANSALDOLASE_2"/>
    <property type="match status" value="1"/>
</dbReference>
<proteinExistence type="inferred from homology"/>
<comment type="function">
    <text evidence="2">Transaldolase is important for the balance of metabolites in the pentose-phosphate pathway.</text>
</comment>
<comment type="catalytic activity">
    <reaction evidence="2">
        <text>D-sedoheptulose 7-phosphate + D-glyceraldehyde 3-phosphate = D-erythrose 4-phosphate + beta-D-fructose 6-phosphate</text>
        <dbReference type="Rhea" id="RHEA:17053"/>
        <dbReference type="ChEBI" id="CHEBI:16897"/>
        <dbReference type="ChEBI" id="CHEBI:57483"/>
        <dbReference type="ChEBI" id="CHEBI:57634"/>
        <dbReference type="ChEBI" id="CHEBI:59776"/>
        <dbReference type="EC" id="2.2.1.2"/>
    </reaction>
</comment>
<comment type="pathway">
    <text evidence="2">Carbohydrate degradation; pentose phosphate pathway; D-glyceraldehyde 3-phosphate and beta-D-fructose 6-phosphate from D-ribose 5-phosphate and D-xylulose 5-phosphate (non-oxidative stage): step 2/3.</text>
</comment>
<comment type="subunit">
    <text evidence="1">Homodimer.</text>
</comment>
<comment type="subcellular location">
    <subcellularLocation>
        <location evidence="2">Cytoplasm</location>
    </subcellularLocation>
</comment>
<comment type="similarity">
    <text evidence="2">Belongs to the transaldolase family. Type 1 subfamily.</text>
</comment>
<keyword id="KW-0963">Cytoplasm</keyword>
<keyword id="KW-0570">Pentose shunt</keyword>
<keyword id="KW-0704">Schiff base</keyword>
<keyword id="KW-0808">Transferase</keyword>
<evidence type="ECO:0000250" key="1"/>
<evidence type="ECO:0000255" key="2">
    <source>
        <dbReference type="HAMAP-Rule" id="MF_00492"/>
    </source>
</evidence>
<sequence length="317" mass="35321">MTTALDQLKQYTTVVADTGDFQQLAQYKPQDATTNPSLILKAVQKDAYKPILEKTVRDHRNESTDFIIDRLLIAFGTEILKLIPGRVSTEVDARLSFDTQRSIDKGRELIKLYEAAGVGRERILIKLASTWEGIRAAEVLQKEGIKCNMTLLFSLVQAAACAEAGAQLISPFVGRIYDWYKKQAGADWNEARDGGANDPGVQSVRRIYTYYKTFGYKTEVMGASFRTTSQIIELAGCDLLTISPDLLQKLQESNDTVARKLSPDTLQDKPAERVAIDEASFRFQLNDEAMATEKLAEGIRVFAADAVKLEKLIDALR</sequence>
<feature type="chain" id="PRO_1000126239" description="Transaldolase">
    <location>
        <begin position="1"/>
        <end position="317"/>
    </location>
</feature>
<feature type="active site" description="Schiff-base intermediate with substrate" evidence="2">
    <location>
        <position position="126"/>
    </location>
</feature>
<reference key="1">
    <citation type="journal article" date="2009" name="J. Bacteriol.">
        <title>The genome of Burkholderia cenocepacia J2315, an epidemic pathogen of cystic fibrosis patients.</title>
        <authorList>
            <person name="Holden M.T."/>
            <person name="Seth-Smith H.M."/>
            <person name="Crossman L.C."/>
            <person name="Sebaihia M."/>
            <person name="Bentley S.D."/>
            <person name="Cerdeno-Tarraga A.M."/>
            <person name="Thomson N.R."/>
            <person name="Bason N."/>
            <person name="Quail M.A."/>
            <person name="Sharp S."/>
            <person name="Cherevach I."/>
            <person name="Churcher C."/>
            <person name="Goodhead I."/>
            <person name="Hauser H."/>
            <person name="Holroyd N."/>
            <person name="Mungall K."/>
            <person name="Scott P."/>
            <person name="Walker D."/>
            <person name="White B."/>
            <person name="Rose H."/>
            <person name="Iversen P."/>
            <person name="Mil-Homens D."/>
            <person name="Rocha E.P."/>
            <person name="Fialho A.M."/>
            <person name="Baldwin A."/>
            <person name="Dowson C."/>
            <person name="Barrell B.G."/>
            <person name="Govan J.R."/>
            <person name="Vandamme P."/>
            <person name="Hart C.A."/>
            <person name="Mahenthiralingam E."/>
            <person name="Parkhill J."/>
        </authorList>
    </citation>
    <scope>NUCLEOTIDE SEQUENCE [LARGE SCALE GENOMIC DNA]</scope>
    <source>
        <strain>ATCC BAA-245 / DSM 16553 / LMG 16656 / NCTC 13227 / J2315 / CF5610</strain>
    </source>
</reference>
<protein>
    <recommendedName>
        <fullName evidence="2">Transaldolase</fullName>
        <ecNumber evidence="2">2.2.1.2</ecNumber>
    </recommendedName>
</protein>
<accession>B4E6F9</accession>
<gene>
    <name evidence="2" type="primary">tal</name>
    <name type="ordered locus">BceJ2315_23930</name>
    <name type="ORF">BCAL2433</name>
</gene>
<name>TAL_BURCJ</name>
<organism>
    <name type="scientific">Burkholderia cenocepacia (strain ATCC BAA-245 / DSM 16553 / LMG 16656 / NCTC 13227 / J2315 / CF5610)</name>
    <name type="common">Burkholderia cepacia (strain J2315)</name>
    <dbReference type="NCBI Taxonomy" id="216591"/>
    <lineage>
        <taxon>Bacteria</taxon>
        <taxon>Pseudomonadati</taxon>
        <taxon>Pseudomonadota</taxon>
        <taxon>Betaproteobacteria</taxon>
        <taxon>Burkholderiales</taxon>
        <taxon>Burkholderiaceae</taxon>
        <taxon>Burkholderia</taxon>
        <taxon>Burkholderia cepacia complex</taxon>
    </lineage>
</organism>